<sequence>MSAILGKKIGMTSLFDENRKAIPCTVIEAGPCFVSQVKTVDKDGYAAYQICFDKKKENRTAKPQLGHFQKSGVEPSYKMSEFRKEIFADELNAGDEVKVSIFKEGDTVKVSGVSKGKGFAGVVKRYHFGGGSKTHGQSDRLRAPGSVGGSSFPSRTFKGQRMAGRKGSDSVTIRGLKVVKVLPESNLLVIKGAVPGPNNSYLEIVTSK</sequence>
<feature type="chain" id="PRO_1000141842" description="Large ribosomal subunit protein uL3">
    <location>
        <begin position="1"/>
        <end position="208"/>
    </location>
</feature>
<feature type="region of interest" description="Disordered" evidence="2">
    <location>
        <begin position="130"/>
        <end position="168"/>
    </location>
</feature>
<gene>
    <name evidence="1" type="primary">rplC</name>
    <name type="ordered locus">Ctha_1088</name>
</gene>
<organism>
    <name type="scientific">Chloroherpeton thalassium (strain ATCC 35110 / GB-78)</name>
    <dbReference type="NCBI Taxonomy" id="517418"/>
    <lineage>
        <taxon>Bacteria</taxon>
        <taxon>Pseudomonadati</taxon>
        <taxon>Chlorobiota</taxon>
        <taxon>Chlorobiia</taxon>
        <taxon>Chlorobiales</taxon>
        <taxon>Chloroherpetonaceae</taxon>
        <taxon>Chloroherpeton</taxon>
    </lineage>
</organism>
<accession>B3QY24</accession>
<evidence type="ECO:0000255" key="1">
    <source>
        <dbReference type="HAMAP-Rule" id="MF_01325"/>
    </source>
</evidence>
<evidence type="ECO:0000256" key="2">
    <source>
        <dbReference type="SAM" id="MobiDB-lite"/>
    </source>
</evidence>
<evidence type="ECO:0000305" key="3"/>
<keyword id="KW-1185">Reference proteome</keyword>
<keyword id="KW-0687">Ribonucleoprotein</keyword>
<keyword id="KW-0689">Ribosomal protein</keyword>
<keyword id="KW-0694">RNA-binding</keyword>
<keyword id="KW-0699">rRNA-binding</keyword>
<comment type="function">
    <text evidence="1">One of the primary rRNA binding proteins, it binds directly near the 3'-end of the 23S rRNA, where it nucleates assembly of the 50S subunit.</text>
</comment>
<comment type="subunit">
    <text evidence="1">Part of the 50S ribosomal subunit. Forms a cluster with proteins L14 and L19.</text>
</comment>
<comment type="similarity">
    <text evidence="1">Belongs to the universal ribosomal protein uL3 family.</text>
</comment>
<dbReference type="EMBL" id="CP001100">
    <property type="protein sequence ID" value="ACF13552.1"/>
    <property type="molecule type" value="Genomic_DNA"/>
</dbReference>
<dbReference type="RefSeq" id="WP_012499636.1">
    <property type="nucleotide sequence ID" value="NC_011026.1"/>
</dbReference>
<dbReference type="SMR" id="B3QY24"/>
<dbReference type="STRING" id="517418.Ctha_1088"/>
<dbReference type="KEGG" id="cts:Ctha_1088"/>
<dbReference type="eggNOG" id="COG0087">
    <property type="taxonomic scope" value="Bacteria"/>
</dbReference>
<dbReference type="HOGENOM" id="CLU_044142_4_1_10"/>
<dbReference type="OrthoDB" id="9806135at2"/>
<dbReference type="Proteomes" id="UP000001208">
    <property type="component" value="Chromosome"/>
</dbReference>
<dbReference type="GO" id="GO:0022625">
    <property type="term" value="C:cytosolic large ribosomal subunit"/>
    <property type="evidence" value="ECO:0007669"/>
    <property type="project" value="TreeGrafter"/>
</dbReference>
<dbReference type="GO" id="GO:0019843">
    <property type="term" value="F:rRNA binding"/>
    <property type="evidence" value="ECO:0007669"/>
    <property type="project" value="UniProtKB-UniRule"/>
</dbReference>
<dbReference type="GO" id="GO:0003735">
    <property type="term" value="F:structural constituent of ribosome"/>
    <property type="evidence" value="ECO:0007669"/>
    <property type="project" value="InterPro"/>
</dbReference>
<dbReference type="GO" id="GO:0006412">
    <property type="term" value="P:translation"/>
    <property type="evidence" value="ECO:0007669"/>
    <property type="project" value="UniProtKB-UniRule"/>
</dbReference>
<dbReference type="FunFam" id="2.40.30.10:FF:000004">
    <property type="entry name" value="50S ribosomal protein L3"/>
    <property type="match status" value="1"/>
</dbReference>
<dbReference type="FunFam" id="3.30.160.810:FF:000001">
    <property type="entry name" value="50S ribosomal protein L3"/>
    <property type="match status" value="1"/>
</dbReference>
<dbReference type="Gene3D" id="3.30.160.810">
    <property type="match status" value="1"/>
</dbReference>
<dbReference type="Gene3D" id="2.40.30.10">
    <property type="entry name" value="Translation factors"/>
    <property type="match status" value="1"/>
</dbReference>
<dbReference type="HAMAP" id="MF_01325_B">
    <property type="entry name" value="Ribosomal_uL3_B"/>
    <property type="match status" value="1"/>
</dbReference>
<dbReference type="InterPro" id="IPR000597">
    <property type="entry name" value="Ribosomal_uL3"/>
</dbReference>
<dbReference type="InterPro" id="IPR019927">
    <property type="entry name" value="Ribosomal_uL3_bac/org-type"/>
</dbReference>
<dbReference type="InterPro" id="IPR009000">
    <property type="entry name" value="Transl_B-barrel_sf"/>
</dbReference>
<dbReference type="NCBIfam" id="TIGR03625">
    <property type="entry name" value="L3_bact"/>
    <property type="match status" value="1"/>
</dbReference>
<dbReference type="PANTHER" id="PTHR11229">
    <property type="entry name" value="50S RIBOSOMAL PROTEIN L3"/>
    <property type="match status" value="1"/>
</dbReference>
<dbReference type="PANTHER" id="PTHR11229:SF16">
    <property type="entry name" value="LARGE RIBOSOMAL SUBUNIT PROTEIN UL3C"/>
    <property type="match status" value="1"/>
</dbReference>
<dbReference type="Pfam" id="PF00297">
    <property type="entry name" value="Ribosomal_L3"/>
    <property type="match status" value="1"/>
</dbReference>
<dbReference type="SUPFAM" id="SSF50447">
    <property type="entry name" value="Translation proteins"/>
    <property type="match status" value="1"/>
</dbReference>
<name>RL3_CHLT3</name>
<reference key="1">
    <citation type="submission" date="2008-06" db="EMBL/GenBank/DDBJ databases">
        <title>Complete sequence of Chloroherpeton thalassium ATCC 35110.</title>
        <authorList>
            <consortium name="US DOE Joint Genome Institute"/>
            <person name="Lucas S."/>
            <person name="Copeland A."/>
            <person name="Lapidus A."/>
            <person name="Glavina del Rio T."/>
            <person name="Dalin E."/>
            <person name="Tice H."/>
            <person name="Bruce D."/>
            <person name="Goodwin L."/>
            <person name="Pitluck S."/>
            <person name="Schmutz J."/>
            <person name="Larimer F."/>
            <person name="Land M."/>
            <person name="Hauser L."/>
            <person name="Kyrpides N."/>
            <person name="Mikhailova N."/>
            <person name="Liu Z."/>
            <person name="Li T."/>
            <person name="Zhao F."/>
            <person name="Overmann J."/>
            <person name="Bryant D.A."/>
            <person name="Richardson P."/>
        </authorList>
    </citation>
    <scope>NUCLEOTIDE SEQUENCE [LARGE SCALE GENOMIC DNA]</scope>
    <source>
        <strain>ATCC 35110 / GB-78</strain>
    </source>
</reference>
<protein>
    <recommendedName>
        <fullName evidence="1">Large ribosomal subunit protein uL3</fullName>
    </recommendedName>
    <alternativeName>
        <fullName evidence="3">50S ribosomal protein L3</fullName>
    </alternativeName>
</protein>
<proteinExistence type="inferred from homology"/>